<organism>
    <name type="scientific">Geobacter sp. (strain M21)</name>
    <dbReference type="NCBI Taxonomy" id="443144"/>
    <lineage>
        <taxon>Bacteria</taxon>
        <taxon>Pseudomonadati</taxon>
        <taxon>Thermodesulfobacteriota</taxon>
        <taxon>Desulfuromonadia</taxon>
        <taxon>Geobacterales</taxon>
        <taxon>Geobacteraceae</taxon>
        <taxon>Geobacter</taxon>
    </lineage>
</organism>
<dbReference type="EC" id="2.7.9.3" evidence="1"/>
<dbReference type="EMBL" id="CP001661">
    <property type="protein sequence ID" value="ACT19547.1"/>
    <property type="molecule type" value="Genomic_DNA"/>
</dbReference>
<dbReference type="STRING" id="443144.GM21_3526"/>
<dbReference type="KEGG" id="gem:GM21_3526"/>
<dbReference type="eggNOG" id="COG0709">
    <property type="taxonomic scope" value="Bacteria"/>
</dbReference>
<dbReference type="HOGENOM" id="CLU_032859_0_1_7"/>
<dbReference type="OrthoDB" id="9767928at2"/>
<dbReference type="GO" id="GO:0005737">
    <property type="term" value="C:cytoplasm"/>
    <property type="evidence" value="ECO:0007669"/>
    <property type="project" value="TreeGrafter"/>
</dbReference>
<dbReference type="GO" id="GO:0005524">
    <property type="term" value="F:ATP binding"/>
    <property type="evidence" value="ECO:0007669"/>
    <property type="project" value="UniProtKB-UniRule"/>
</dbReference>
<dbReference type="GO" id="GO:0000287">
    <property type="term" value="F:magnesium ion binding"/>
    <property type="evidence" value="ECO:0007669"/>
    <property type="project" value="UniProtKB-UniRule"/>
</dbReference>
<dbReference type="GO" id="GO:0004756">
    <property type="term" value="F:selenide, water dikinase activity"/>
    <property type="evidence" value="ECO:0007669"/>
    <property type="project" value="UniProtKB-UniRule"/>
</dbReference>
<dbReference type="GO" id="GO:0016260">
    <property type="term" value="P:selenocysteine biosynthetic process"/>
    <property type="evidence" value="ECO:0007669"/>
    <property type="project" value="InterPro"/>
</dbReference>
<dbReference type="CDD" id="cd02195">
    <property type="entry name" value="SelD"/>
    <property type="match status" value="1"/>
</dbReference>
<dbReference type="FunFam" id="3.30.1330.10:FF:000003">
    <property type="entry name" value="Selenide, water dikinase"/>
    <property type="match status" value="1"/>
</dbReference>
<dbReference type="FunFam" id="3.90.650.10:FF:000004">
    <property type="entry name" value="Selenide, water dikinase"/>
    <property type="match status" value="1"/>
</dbReference>
<dbReference type="Gene3D" id="3.90.650.10">
    <property type="entry name" value="PurM-like C-terminal domain"/>
    <property type="match status" value="1"/>
</dbReference>
<dbReference type="Gene3D" id="3.30.1330.10">
    <property type="entry name" value="PurM-like, N-terminal domain"/>
    <property type="match status" value="1"/>
</dbReference>
<dbReference type="HAMAP" id="MF_00625">
    <property type="entry name" value="SelD"/>
    <property type="match status" value="1"/>
</dbReference>
<dbReference type="InterPro" id="IPR010918">
    <property type="entry name" value="PurM-like_C_dom"/>
</dbReference>
<dbReference type="InterPro" id="IPR036676">
    <property type="entry name" value="PurM-like_C_sf"/>
</dbReference>
<dbReference type="InterPro" id="IPR016188">
    <property type="entry name" value="PurM-like_N"/>
</dbReference>
<dbReference type="InterPro" id="IPR036921">
    <property type="entry name" value="PurM-like_N_sf"/>
</dbReference>
<dbReference type="InterPro" id="IPR023061">
    <property type="entry name" value="SelD_I"/>
</dbReference>
<dbReference type="InterPro" id="IPR004536">
    <property type="entry name" value="SPS/SelD"/>
</dbReference>
<dbReference type="NCBIfam" id="NF002098">
    <property type="entry name" value="PRK00943.1"/>
    <property type="match status" value="1"/>
</dbReference>
<dbReference type="NCBIfam" id="TIGR00476">
    <property type="entry name" value="selD"/>
    <property type="match status" value="1"/>
</dbReference>
<dbReference type="PANTHER" id="PTHR10256:SF0">
    <property type="entry name" value="INACTIVE SELENIDE, WATER DIKINASE-LIKE PROTEIN-RELATED"/>
    <property type="match status" value="1"/>
</dbReference>
<dbReference type="PANTHER" id="PTHR10256">
    <property type="entry name" value="SELENIDE, WATER DIKINASE"/>
    <property type="match status" value="1"/>
</dbReference>
<dbReference type="Pfam" id="PF00586">
    <property type="entry name" value="AIRS"/>
    <property type="match status" value="1"/>
</dbReference>
<dbReference type="Pfam" id="PF02769">
    <property type="entry name" value="AIRS_C"/>
    <property type="match status" value="1"/>
</dbReference>
<dbReference type="PIRSF" id="PIRSF036407">
    <property type="entry name" value="Selenphspht_syn"/>
    <property type="match status" value="1"/>
</dbReference>
<dbReference type="SUPFAM" id="SSF56042">
    <property type="entry name" value="PurM C-terminal domain-like"/>
    <property type="match status" value="1"/>
</dbReference>
<dbReference type="SUPFAM" id="SSF55326">
    <property type="entry name" value="PurM N-terminal domain-like"/>
    <property type="match status" value="1"/>
</dbReference>
<proteinExistence type="inferred from homology"/>
<feature type="chain" id="PRO_1000212307" description="Selenide, water dikinase">
    <location>
        <begin position="1"/>
        <end position="343"/>
    </location>
</feature>
<feature type="active site" evidence="1">
    <location>
        <position position="16"/>
    </location>
</feature>
<feature type="binding site" description="in other chain" evidence="1">
    <location>
        <position position="19"/>
    </location>
    <ligand>
        <name>ATP</name>
        <dbReference type="ChEBI" id="CHEBI:30616"/>
        <note>ligand shared between dimeric partners</note>
    </ligand>
</feature>
<feature type="binding site" description="in other chain" evidence="1">
    <location>
        <begin position="46"/>
        <end position="48"/>
    </location>
    <ligand>
        <name>ATP</name>
        <dbReference type="ChEBI" id="CHEBI:30616"/>
        <note>ligand shared between dimeric partners</note>
    </ligand>
</feature>
<feature type="binding site" evidence="1">
    <location>
        <position position="49"/>
    </location>
    <ligand>
        <name>Mg(2+)</name>
        <dbReference type="ChEBI" id="CHEBI:18420"/>
    </ligand>
</feature>
<feature type="binding site" description="in other chain" evidence="1">
    <location>
        <position position="66"/>
    </location>
    <ligand>
        <name>ATP</name>
        <dbReference type="ChEBI" id="CHEBI:30616"/>
        <note>ligand shared between dimeric partners</note>
    </ligand>
</feature>
<feature type="binding site" description="in other chain" evidence="1">
    <location>
        <position position="89"/>
    </location>
    <ligand>
        <name>ATP</name>
        <dbReference type="ChEBI" id="CHEBI:30616"/>
        <note>ligand shared between dimeric partners</note>
    </ligand>
</feature>
<feature type="binding site" evidence="1">
    <location>
        <position position="89"/>
    </location>
    <ligand>
        <name>Mg(2+)</name>
        <dbReference type="ChEBI" id="CHEBI:18420"/>
    </ligand>
</feature>
<feature type="binding site" evidence="1">
    <location>
        <begin position="137"/>
        <end position="139"/>
    </location>
    <ligand>
        <name>ATP</name>
        <dbReference type="ChEBI" id="CHEBI:30616"/>
        <note>ligand shared between dimeric partners</note>
    </ligand>
</feature>
<feature type="binding site" evidence="1">
    <location>
        <position position="225"/>
    </location>
    <ligand>
        <name>Mg(2+)</name>
        <dbReference type="ChEBI" id="CHEBI:18420"/>
    </ligand>
</feature>
<feature type="site" description="Important for catalytic activity" evidence="1">
    <location>
        <position position="19"/>
    </location>
</feature>
<feature type="non-standard amino acid" description="Selenocysteine">
    <location>
        <position position="16"/>
    </location>
</feature>
<keyword id="KW-0067">ATP-binding</keyword>
<keyword id="KW-0418">Kinase</keyword>
<keyword id="KW-0460">Magnesium</keyword>
<keyword id="KW-0479">Metal-binding</keyword>
<keyword id="KW-0547">Nucleotide-binding</keyword>
<keyword id="KW-0711">Selenium</keyword>
<keyword id="KW-0712">Selenocysteine</keyword>
<keyword id="KW-0808">Transferase</keyword>
<comment type="function">
    <text evidence="1">Synthesizes selenophosphate from selenide and ATP.</text>
</comment>
<comment type="catalytic activity">
    <reaction evidence="1">
        <text>hydrogenselenide + ATP + H2O = selenophosphate + AMP + phosphate + 2 H(+)</text>
        <dbReference type="Rhea" id="RHEA:18737"/>
        <dbReference type="ChEBI" id="CHEBI:15377"/>
        <dbReference type="ChEBI" id="CHEBI:15378"/>
        <dbReference type="ChEBI" id="CHEBI:16144"/>
        <dbReference type="ChEBI" id="CHEBI:29317"/>
        <dbReference type="ChEBI" id="CHEBI:30616"/>
        <dbReference type="ChEBI" id="CHEBI:43474"/>
        <dbReference type="ChEBI" id="CHEBI:456215"/>
        <dbReference type="EC" id="2.7.9.3"/>
    </reaction>
</comment>
<comment type="cofactor">
    <cofactor evidence="1">
        <name>Mg(2+)</name>
        <dbReference type="ChEBI" id="CHEBI:18420"/>
    </cofactor>
    <text evidence="1">Binds 1 Mg(2+) ion per monomer.</text>
</comment>
<comment type="subunit">
    <text evidence="1">Homodimer.</text>
</comment>
<comment type="similarity">
    <text evidence="1">Belongs to the selenophosphate synthase 1 family. Class I subfamily.</text>
</comment>
<evidence type="ECO:0000255" key="1">
    <source>
        <dbReference type="HAMAP-Rule" id="MF_00625"/>
    </source>
</evidence>
<gene>
    <name evidence="1" type="primary">selD</name>
    <name type="ordered locus">GM21_3526</name>
</gene>
<reference key="1">
    <citation type="submission" date="2009-07" db="EMBL/GenBank/DDBJ databases">
        <title>Complete sequence of Geobacter sp. M21.</title>
        <authorList>
            <consortium name="US DOE Joint Genome Institute"/>
            <person name="Lucas S."/>
            <person name="Copeland A."/>
            <person name="Lapidus A."/>
            <person name="Glavina del Rio T."/>
            <person name="Dalin E."/>
            <person name="Tice H."/>
            <person name="Bruce D."/>
            <person name="Goodwin L."/>
            <person name="Pitluck S."/>
            <person name="Saunders E."/>
            <person name="Brettin T."/>
            <person name="Detter J.C."/>
            <person name="Han C."/>
            <person name="Larimer F."/>
            <person name="Land M."/>
            <person name="Hauser L."/>
            <person name="Kyrpides N."/>
            <person name="Ovchinnikova G."/>
            <person name="Lovley D."/>
        </authorList>
    </citation>
    <scope>NUCLEOTIDE SEQUENCE [LARGE SCALE GENOMIC DNA]</scope>
    <source>
        <strain>M21</strain>
    </source>
</reference>
<protein>
    <recommendedName>
        <fullName evidence="1">Selenide, water dikinase</fullName>
        <ecNumber evidence="1">2.7.9.3</ecNumber>
    </recommendedName>
    <alternativeName>
        <fullName evidence="1">Selenium donor protein</fullName>
    </alternativeName>
    <alternativeName>
        <fullName evidence="1">Selenophosphate synthase</fullName>
    </alternativeName>
</protein>
<accession>C6E5Z5</accession>
<sequence length="343" mass="35670">MTDKVRLTTMVQAAGUAAKLGPAGLEEAIHDITRSDDPNLIVGVEGAEDAGIYRIGDNLALVETTDIITPLVDDPFTFGRIAAANALSDVYAMGGRPVTAMNLAFFPACSLPTKVLAAILAGGSDALKEAGACLVGGHTVEDNELKFGLAVTGLIDPARVVRNCTARPGDLIVITKPLGTGIVSTAIKAEMVEPVLEAEATRWMTILNAQAAELMVACRATAATDVTGFGFIGHACEMALGAKVTFRIELARVPVIPGVPALIDDGLVPAGCYRNRQHYEQHVSGKSGDPLLPLFDPQTSGGLLITFAPDDARTFLSRAGEEGLFAACIGEVEPAGGTPLVFV</sequence>
<name>SELD_GEOSM</name>